<gene>
    <name type="primary">prsA1</name>
    <name type="ordered locus">SPs0804</name>
</gene>
<proteinExistence type="inferred from homology"/>
<keyword id="KW-1003">Cell membrane</keyword>
<keyword id="KW-0413">Isomerase</keyword>
<keyword id="KW-0449">Lipoprotein</keyword>
<keyword id="KW-0472">Membrane</keyword>
<keyword id="KW-0564">Palmitate</keyword>
<keyword id="KW-0697">Rotamase</keyword>
<keyword id="KW-0732">Signal</keyword>
<accession>P0DD43</accession>
<accession>P60751</accession>
<accession>Q99Z56</accession>
<feature type="signal peptide" evidence="2">
    <location>
        <begin position="1"/>
        <end position="22"/>
    </location>
</feature>
<feature type="chain" id="PRO_0000411461" description="Foldase protein PrsA 1">
    <location>
        <begin position="23"/>
        <end position="351"/>
    </location>
</feature>
<feature type="domain" description="PpiC">
    <location>
        <begin position="145"/>
        <end position="240"/>
    </location>
</feature>
<feature type="region of interest" description="Disordered" evidence="3">
    <location>
        <begin position="303"/>
        <end position="351"/>
    </location>
</feature>
<feature type="compositionally biased region" description="Low complexity" evidence="3">
    <location>
        <begin position="303"/>
        <end position="317"/>
    </location>
</feature>
<feature type="compositionally biased region" description="Low complexity" evidence="3">
    <location>
        <begin position="326"/>
        <end position="351"/>
    </location>
</feature>
<feature type="lipid moiety-binding region" description="N-palmitoyl cysteine" evidence="2">
    <location>
        <position position="23"/>
    </location>
</feature>
<feature type="lipid moiety-binding region" description="S-diacylglycerol cysteine" evidence="2">
    <location>
        <position position="23"/>
    </location>
</feature>
<reference key="1">
    <citation type="journal article" date="2003" name="Genome Res.">
        <title>Genome sequence of an M3 strain of Streptococcus pyogenes reveals a large-scale genomic rearrangement in invasive strains and new insights into phage evolution.</title>
        <authorList>
            <person name="Nakagawa I."/>
            <person name="Kurokawa K."/>
            <person name="Yamashita A."/>
            <person name="Nakata M."/>
            <person name="Tomiyasu Y."/>
            <person name="Okahashi N."/>
            <person name="Kawabata S."/>
            <person name="Yamazaki K."/>
            <person name="Shiba T."/>
            <person name="Yasunaga T."/>
            <person name="Hayashi H."/>
            <person name="Hattori M."/>
            <person name="Hamada S."/>
        </authorList>
    </citation>
    <scope>NUCLEOTIDE SEQUENCE [LARGE SCALE GENOMIC DNA]</scope>
    <source>
        <strain>SSI-1</strain>
    </source>
</reference>
<dbReference type="EC" id="5.2.1.8"/>
<dbReference type="EMBL" id="BA000034">
    <property type="protein sequence ID" value="BAC63899.1"/>
    <property type="molecule type" value="Genomic_DNA"/>
</dbReference>
<dbReference type="SMR" id="P0DD43"/>
<dbReference type="KEGG" id="sps:SPs0804"/>
<dbReference type="HOGENOM" id="CLU_034646_6_0_9"/>
<dbReference type="PHI-base" id="PHI:11792"/>
<dbReference type="GO" id="GO:0005886">
    <property type="term" value="C:plasma membrane"/>
    <property type="evidence" value="ECO:0007669"/>
    <property type="project" value="UniProtKB-SubCell"/>
</dbReference>
<dbReference type="GO" id="GO:0003755">
    <property type="term" value="F:peptidyl-prolyl cis-trans isomerase activity"/>
    <property type="evidence" value="ECO:0007669"/>
    <property type="project" value="UniProtKB-UniRule"/>
</dbReference>
<dbReference type="GO" id="GO:0006457">
    <property type="term" value="P:protein folding"/>
    <property type="evidence" value="ECO:0007669"/>
    <property type="project" value="UniProtKB-UniRule"/>
</dbReference>
<dbReference type="Gene3D" id="3.10.50.40">
    <property type="match status" value="1"/>
</dbReference>
<dbReference type="HAMAP" id="MF_01145">
    <property type="entry name" value="Foldase_PrsA"/>
    <property type="match status" value="1"/>
</dbReference>
<dbReference type="InterPro" id="IPR023059">
    <property type="entry name" value="Foldase_PrsA"/>
</dbReference>
<dbReference type="InterPro" id="IPR046357">
    <property type="entry name" value="PPIase_dom_sf"/>
</dbReference>
<dbReference type="InterPro" id="IPR000297">
    <property type="entry name" value="PPIase_PpiC"/>
</dbReference>
<dbReference type="InterPro" id="IPR050245">
    <property type="entry name" value="PrsA_foldase"/>
</dbReference>
<dbReference type="InterPro" id="IPR027304">
    <property type="entry name" value="Trigger_fact/SurA_dom_sf"/>
</dbReference>
<dbReference type="NCBIfam" id="NF002361">
    <property type="entry name" value="PRK01326.1"/>
    <property type="match status" value="1"/>
</dbReference>
<dbReference type="NCBIfam" id="NF009105">
    <property type="entry name" value="PRK12450.1"/>
    <property type="match status" value="1"/>
</dbReference>
<dbReference type="PANTHER" id="PTHR47245:SF1">
    <property type="entry name" value="FOLDASE PROTEIN PRSA"/>
    <property type="match status" value="1"/>
</dbReference>
<dbReference type="PANTHER" id="PTHR47245">
    <property type="entry name" value="PEPTIDYLPROLYL ISOMERASE"/>
    <property type="match status" value="1"/>
</dbReference>
<dbReference type="Pfam" id="PF13145">
    <property type="entry name" value="Rotamase_2"/>
    <property type="match status" value="1"/>
</dbReference>
<dbReference type="SUPFAM" id="SSF54534">
    <property type="entry name" value="FKBP-like"/>
    <property type="match status" value="1"/>
</dbReference>
<dbReference type="SUPFAM" id="SSF109998">
    <property type="entry name" value="Triger factor/SurA peptide-binding domain-like"/>
    <property type="match status" value="1"/>
</dbReference>
<dbReference type="PROSITE" id="PS50198">
    <property type="entry name" value="PPIC_PPIASE_2"/>
    <property type="match status" value="1"/>
</dbReference>
<dbReference type="PROSITE" id="PS51257">
    <property type="entry name" value="PROKAR_LIPOPROTEIN"/>
    <property type="match status" value="1"/>
</dbReference>
<comment type="function">
    <text evidence="1">Plays a major role in protein secretion by helping the post-translocational extracellular folding of several secreted proteins.</text>
</comment>
<comment type="catalytic activity">
    <reaction>
        <text>[protein]-peptidylproline (omega=180) = [protein]-peptidylproline (omega=0)</text>
        <dbReference type="Rhea" id="RHEA:16237"/>
        <dbReference type="Rhea" id="RHEA-COMP:10747"/>
        <dbReference type="Rhea" id="RHEA-COMP:10748"/>
        <dbReference type="ChEBI" id="CHEBI:83833"/>
        <dbReference type="ChEBI" id="CHEBI:83834"/>
        <dbReference type="EC" id="5.2.1.8"/>
    </reaction>
</comment>
<comment type="subcellular location">
    <subcellularLocation>
        <location evidence="4">Cell membrane</location>
        <topology evidence="4">Lipid-anchor</topology>
    </subcellularLocation>
</comment>
<comment type="similarity">
    <text evidence="4">Belongs to the PrsA family.</text>
</comment>
<sequence>MKNSNKLIASVVTLASVMALAACQSTNDNTKVISMKGDTISVSDFYNETKNTEVSQKAMLNLVISRVFEAQYGDKVSKKEVEKAYHKTAEQYGASFSAALAQSSLTPETFKRQIRSSKLVEYAVKEAAKKELTTQEYKKAYESYTPTMAVEMITLDNEETAKSVLEELKAEGADFTAIAKEKTTTPEKKVTYKFDSGATNVPTDVVKAASSLNEGGISDVISVLDPTSYQKKFYIVKVTKKAEKKSDWQEYKKRLKAIIIAEKSKDMNFQNKVIANALDKANVKIKDKAFANILAQYANLGQKTKAASESSTTSESSKAAEENPSESEQTQTSSAEEPTETEAQTQEPAAQ</sequence>
<protein>
    <recommendedName>
        <fullName>Foldase protein PrsA 1</fullName>
        <ecNumber>5.2.1.8</ecNumber>
    </recommendedName>
</protein>
<organism>
    <name type="scientific">Streptococcus pyogenes serotype M3 (strain SSI-1)</name>
    <dbReference type="NCBI Taxonomy" id="193567"/>
    <lineage>
        <taxon>Bacteria</taxon>
        <taxon>Bacillati</taxon>
        <taxon>Bacillota</taxon>
        <taxon>Bacilli</taxon>
        <taxon>Lactobacillales</taxon>
        <taxon>Streptococcaceae</taxon>
        <taxon>Streptococcus</taxon>
    </lineage>
</organism>
<evidence type="ECO:0000250" key="1"/>
<evidence type="ECO:0000255" key="2"/>
<evidence type="ECO:0000256" key="3">
    <source>
        <dbReference type="SAM" id="MobiDB-lite"/>
    </source>
</evidence>
<evidence type="ECO:0000305" key="4"/>
<name>PRSA1_STRPQ</name>